<evidence type="ECO:0000255" key="1">
    <source>
        <dbReference type="HAMAP-Rule" id="MF_00416"/>
    </source>
</evidence>
<organism>
    <name type="scientific">Pectobacterium atrosepticum (strain SCRI 1043 / ATCC BAA-672)</name>
    <name type="common">Erwinia carotovora subsp. atroseptica</name>
    <dbReference type="NCBI Taxonomy" id="218491"/>
    <lineage>
        <taxon>Bacteria</taxon>
        <taxon>Pseudomonadati</taxon>
        <taxon>Pseudomonadota</taxon>
        <taxon>Gammaproteobacteria</taxon>
        <taxon>Enterobacterales</taxon>
        <taxon>Pectobacteriaceae</taxon>
        <taxon>Pectobacterium</taxon>
    </lineage>
</organism>
<dbReference type="EMBL" id="BX950851">
    <property type="protein sequence ID" value="CAG74615.1"/>
    <property type="molecule type" value="Genomic_DNA"/>
</dbReference>
<dbReference type="RefSeq" id="WP_011093288.1">
    <property type="nucleotide sequence ID" value="NC_004547.2"/>
</dbReference>
<dbReference type="SMR" id="Q6D6H2"/>
<dbReference type="STRING" id="218491.ECA1709"/>
<dbReference type="KEGG" id="eca:ECA1709"/>
<dbReference type="PATRIC" id="fig|218491.5.peg.1736"/>
<dbReference type="eggNOG" id="COG1706">
    <property type="taxonomic scope" value="Bacteria"/>
</dbReference>
<dbReference type="HOGENOM" id="CLU_045235_1_0_6"/>
<dbReference type="OrthoDB" id="9786431at2"/>
<dbReference type="Proteomes" id="UP000007966">
    <property type="component" value="Chromosome"/>
</dbReference>
<dbReference type="GO" id="GO:0009428">
    <property type="term" value="C:bacterial-type flagellum basal body, distal rod, P ring"/>
    <property type="evidence" value="ECO:0007669"/>
    <property type="project" value="InterPro"/>
</dbReference>
<dbReference type="GO" id="GO:0030288">
    <property type="term" value="C:outer membrane-bounded periplasmic space"/>
    <property type="evidence" value="ECO:0007669"/>
    <property type="project" value="InterPro"/>
</dbReference>
<dbReference type="GO" id="GO:0005198">
    <property type="term" value="F:structural molecule activity"/>
    <property type="evidence" value="ECO:0007669"/>
    <property type="project" value="InterPro"/>
</dbReference>
<dbReference type="GO" id="GO:0071973">
    <property type="term" value="P:bacterial-type flagellum-dependent cell motility"/>
    <property type="evidence" value="ECO:0007669"/>
    <property type="project" value="InterPro"/>
</dbReference>
<dbReference type="HAMAP" id="MF_00416">
    <property type="entry name" value="FlgI"/>
    <property type="match status" value="1"/>
</dbReference>
<dbReference type="InterPro" id="IPR001782">
    <property type="entry name" value="Flag_FlgI"/>
</dbReference>
<dbReference type="NCBIfam" id="NF003676">
    <property type="entry name" value="PRK05303.1"/>
    <property type="match status" value="1"/>
</dbReference>
<dbReference type="PANTHER" id="PTHR30381">
    <property type="entry name" value="FLAGELLAR P-RING PERIPLASMIC PROTEIN FLGI"/>
    <property type="match status" value="1"/>
</dbReference>
<dbReference type="PANTHER" id="PTHR30381:SF0">
    <property type="entry name" value="FLAGELLAR P-RING PROTEIN"/>
    <property type="match status" value="1"/>
</dbReference>
<dbReference type="Pfam" id="PF02119">
    <property type="entry name" value="FlgI"/>
    <property type="match status" value="1"/>
</dbReference>
<dbReference type="PRINTS" id="PR01010">
    <property type="entry name" value="FLGPRINGFLGI"/>
</dbReference>
<feature type="signal peptide" evidence="1">
    <location>
        <begin position="1"/>
        <end position="23"/>
    </location>
</feature>
<feature type="chain" id="PRO_0000009503" description="Flagellar P-ring protein">
    <location>
        <begin position="24"/>
        <end position="369"/>
    </location>
</feature>
<protein>
    <recommendedName>
        <fullName evidence="1">Flagellar P-ring protein</fullName>
    </recommendedName>
    <alternativeName>
        <fullName evidence="1">Basal body P-ring protein</fullName>
    </alternativeName>
</protein>
<proteinExistence type="inferred from homology"/>
<gene>
    <name evidence="1" type="primary">flgI</name>
    <name type="ordered locus">ECA1709</name>
</gene>
<comment type="function">
    <text evidence="1">Assembles around the rod to form the L-ring and probably protects the motor/basal body from shearing forces during rotation.</text>
</comment>
<comment type="subunit">
    <text evidence="1">The basal body constitutes a major portion of the flagellar organelle and consists of four rings (L,P,S, and M) mounted on a central rod.</text>
</comment>
<comment type="subcellular location">
    <subcellularLocation>
        <location evidence="1">Periplasm</location>
    </subcellularLocation>
    <subcellularLocation>
        <location evidence="1">Bacterial flagellum basal body</location>
    </subcellularLocation>
</comment>
<comment type="similarity">
    <text evidence="1">Belongs to the FlgI family.</text>
</comment>
<accession>Q6D6H2</accession>
<name>FLGI_PECAS</name>
<reference key="1">
    <citation type="journal article" date="2004" name="Proc. Natl. Acad. Sci. U.S.A.">
        <title>Genome sequence of the enterobacterial phytopathogen Erwinia carotovora subsp. atroseptica and characterization of virulence factors.</title>
        <authorList>
            <person name="Bell K.S."/>
            <person name="Sebaihia M."/>
            <person name="Pritchard L."/>
            <person name="Holden M.T.G."/>
            <person name="Hyman L.J."/>
            <person name="Holeva M.C."/>
            <person name="Thomson N.R."/>
            <person name="Bentley S.D."/>
            <person name="Churcher L.J.C."/>
            <person name="Mungall K."/>
            <person name="Atkin R."/>
            <person name="Bason N."/>
            <person name="Brooks K."/>
            <person name="Chillingworth T."/>
            <person name="Clark K."/>
            <person name="Doggett J."/>
            <person name="Fraser A."/>
            <person name="Hance Z."/>
            <person name="Hauser H."/>
            <person name="Jagels K."/>
            <person name="Moule S."/>
            <person name="Norbertczak H."/>
            <person name="Ormond D."/>
            <person name="Price C."/>
            <person name="Quail M.A."/>
            <person name="Sanders M."/>
            <person name="Walker D."/>
            <person name="Whitehead S."/>
            <person name="Salmond G.P.C."/>
            <person name="Birch P.R.J."/>
            <person name="Parkhill J."/>
            <person name="Toth I.K."/>
        </authorList>
    </citation>
    <scope>NUCLEOTIDE SEQUENCE [LARGE SCALE GENOMIC DNA]</scope>
    <source>
        <strain>SCRI 1043 / ATCC BAA-672</strain>
    </source>
</reference>
<keyword id="KW-0975">Bacterial flagellum</keyword>
<keyword id="KW-0574">Periplasm</keyword>
<keyword id="KW-1185">Reference proteome</keyword>
<keyword id="KW-0732">Signal</keyword>
<sequence>MRIASFFTVLLTLLTLNITPASAERIRDLVNIQGVRGNALIGYGLVVGLDGSGDQTMQTPFTTQSLTNMLSQLGITVPAGTNMQLKNVAAVMVTAELPPFGRTGQNIDIVVSSLGNAKSLRGGTLLMTPLKGVDNQVYALAQGNVLVGGAGASAGGSSVQVNQLAGGRISNGAVIERELPSTFGTSNTIMLQLKNDDFSMAQKVSDAINRSGYGGTASPLDSRTIQVLAPHGNSSQVRFLADVQNIEVNVGIQDAKVVINSRTGSVVMNRDVTLDSCAIAQGNLSVTINQQANVSQPNTPFGGGQTVVTPQTEISVQQTGGVLQRVNSSANLNNVVRALNSLGATPMELMSILQAMQSAGCLRAKLEII</sequence>